<feature type="chain" id="PRO_1000006088" description="Elongation factor Ts">
    <location>
        <begin position="1"/>
        <end position="283"/>
    </location>
</feature>
<feature type="region of interest" description="Involved in Mg(2+) ion dislocation from EF-Tu" evidence="1">
    <location>
        <begin position="80"/>
        <end position="83"/>
    </location>
</feature>
<name>EFTS_ECOL5</name>
<comment type="function">
    <text evidence="1">Associates with the EF-Tu.GDP complex and induces the exchange of GDP to GTP. It remains bound to the aminoacyl-tRNA.EF-Tu.GTP complex up to the GTP hydrolysis stage on the ribosome.</text>
</comment>
<comment type="subcellular location">
    <subcellularLocation>
        <location evidence="1">Cytoplasm</location>
    </subcellularLocation>
</comment>
<comment type="similarity">
    <text evidence="1">Belongs to the EF-Ts family.</text>
</comment>
<accession>Q0TLG3</accession>
<protein>
    <recommendedName>
        <fullName evidence="1">Elongation factor Ts</fullName>
        <shortName evidence="1">EF-Ts</shortName>
    </recommendedName>
</protein>
<sequence length="283" mass="30423">MAEITASLVKELRERTGAGMMDCKKALTEANGDIELAIENMRKSGAIKAAKKAGNVAADGVIKTKIDGNYGIILEVNCQTDFVAKDAGFQAFADKVLDAAVAGKITDVEVLKAQFEEERVALVAKIGENINIRRVAALEGDVLGSYQHGARIGVLVAAKGADEELVKHIAMHVAASKPEFIKPEDVSAEVVEKEYQVQLDIAMQSGKPKEIAEKMVEGRMKKFTGEVSLTGQPFVMEPSKTVGQLLKEHNAEVTGFIRFEVGEGIEKVETDFAAEVAAMSKQS</sequence>
<gene>
    <name evidence="1" type="primary">tsf</name>
    <name type="ordered locus">ECP_0178</name>
</gene>
<reference key="1">
    <citation type="journal article" date="2006" name="Mol. Microbiol.">
        <title>Role of pathogenicity island-associated integrases in the genome plasticity of uropathogenic Escherichia coli strain 536.</title>
        <authorList>
            <person name="Hochhut B."/>
            <person name="Wilde C."/>
            <person name="Balling G."/>
            <person name="Middendorf B."/>
            <person name="Dobrindt U."/>
            <person name="Brzuszkiewicz E."/>
            <person name="Gottschalk G."/>
            <person name="Carniel E."/>
            <person name="Hacker J."/>
        </authorList>
    </citation>
    <scope>NUCLEOTIDE SEQUENCE [LARGE SCALE GENOMIC DNA]</scope>
    <source>
        <strain>536 / UPEC</strain>
    </source>
</reference>
<organism>
    <name type="scientific">Escherichia coli O6:K15:H31 (strain 536 / UPEC)</name>
    <dbReference type="NCBI Taxonomy" id="362663"/>
    <lineage>
        <taxon>Bacteria</taxon>
        <taxon>Pseudomonadati</taxon>
        <taxon>Pseudomonadota</taxon>
        <taxon>Gammaproteobacteria</taxon>
        <taxon>Enterobacterales</taxon>
        <taxon>Enterobacteriaceae</taxon>
        <taxon>Escherichia</taxon>
    </lineage>
</organism>
<keyword id="KW-0963">Cytoplasm</keyword>
<keyword id="KW-0251">Elongation factor</keyword>
<keyword id="KW-0648">Protein biosynthesis</keyword>
<dbReference type="EMBL" id="CP000247">
    <property type="protein sequence ID" value="ABG68218.1"/>
    <property type="molecule type" value="Genomic_DNA"/>
</dbReference>
<dbReference type="RefSeq" id="WP_000818114.1">
    <property type="nucleotide sequence ID" value="NC_008253.1"/>
</dbReference>
<dbReference type="SMR" id="Q0TLG3"/>
<dbReference type="GeneID" id="93777255"/>
<dbReference type="KEGG" id="ecp:ECP_0178"/>
<dbReference type="HOGENOM" id="CLU_047155_0_2_6"/>
<dbReference type="Proteomes" id="UP000009182">
    <property type="component" value="Chromosome"/>
</dbReference>
<dbReference type="GO" id="GO:0005737">
    <property type="term" value="C:cytoplasm"/>
    <property type="evidence" value="ECO:0007669"/>
    <property type="project" value="UniProtKB-SubCell"/>
</dbReference>
<dbReference type="GO" id="GO:0003746">
    <property type="term" value="F:translation elongation factor activity"/>
    <property type="evidence" value="ECO:0007669"/>
    <property type="project" value="UniProtKB-UniRule"/>
</dbReference>
<dbReference type="CDD" id="cd14275">
    <property type="entry name" value="UBA_EF-Ts"/>
    <property type="match status" value="1"/>
</dbReference>
<dbReference type="FunFam" id="1.10.286.20:FF:000001">
    <property type="entry name" value="Elongation factor Ts"/>
    <property type="match status" value="1"/>
</dbReference>
<dbReference type="FunFam" id="1.10.8.10:FF:000001">
    <property type="entry name" value="Elongation factor Ts"/>
    <property type="match status" value="1"/>
</dbReference>
<dbReference type="FunFam" id="3.30.479.20:FF:000001">
    <property type="entry name" value="Elongation factor Ts"/>
    <property type="match status" value="1"/>
</dbReference>
<dbReference type="Gene3D" id="1.10.286.20">
    <property type="match status" value="1"/>
</dbReference>
<dbReference type="Gene3D" id="1.10.8.10">
    <property type="entry name" value="DNA helicase RuvA subunit, C-terminal domain"/>
    <property type="match status" value="1"/>
</dbReference>
<dbReference type="Gene3D" id="3.30.479.20">
    <property type="entry name" value="Elongation factor Ts, dimerisation domain"/>
    <property type="match status" value="2"/>
</dbReference>
<dbReference type="HAMAP" id="MF_00050">
    <property type="entry name" value="EF_Ts"/>
    <property type="match status" value="1"/>
</dbReference>
<dbReference type="InterPro" id="IPR036402">
    <property type="entry name" value="EF-Ts_dimer_sf"/>
</dbReference>
<dbReference type="InterPro" id="IPR001816">
    <property type="entry name" value="Transl_elong_EFTs/EF1B"/>
</dbReference>
<dbReference type="InterPro" id="IPR014039">
    <property type="entry name" value="Transl_elong_EFTs/EF1B_dimer"/>
</dbReference>
<dbReference type="InterPro" id="IPR018101">
    <property type="entry name" value="Transl_elong_Ts_CS"/>
</dbReference>
<dbReference type="InterPro" id="IPR009060">
    <property type="entry name" value="UBA-like_sf"/>
</dbReference>
<dbReference type="NCBIfam" id="TIGR00116">
    <property type="entry name" value="tsf"/>
    <property type="match status" value="1"/>
</dbReference>
<dbReference type="PANTHER" id="PTHR11741">
    <property type="entry name" value="ELONGATION FACTOR TS"/>
    <property type="match status" value="1"/>
</dbReference>
<dbReference type="PANTHER" id="PTHR11741:SF0">
    <property type="entry name" value="ELONGATION FACTOR TS, MITOCHONDRIAL"/>
    <property type="match status" value="1"/>
</dbReference>
<dbReference type="Pfam" id="PF00889">
    <property type="entry name" value="EF_TS"/>
    <property type="match status" value="1"/>
</dbReference>
<dbReference type="SUPFAM" id="SSF54713">
    <property type="entry name" value="Elongation factor Ts (EF-Ts), dimerisation domain"/>
    <property type="match status" value="2"/>
</dbReference>
<dbReference type="SUPFAM" id="SSF46934">
    <property type="entry name" value="UBA-like"/>
    <property type="match status" value="1"/>
</dbReference>
<dbReference type="PROSITE" id="PS01126">
    <property type="entry name" value="EF_TS_1"/>
    <property type="match status" value="1"/>
</dbReference>
<dbReference type="PROSITE" id="PS01127">
    <property type="entry name" value="EF_TS_2"/>
    <property type="match status" value="1"/>
</dbReference>
<evidence type="ECO:0000255" key="1">
    <source>
        <dbReference type="HAMAP-Rule" id="MF_00050"/>
    </source>
</evidence>
<proteinExistence type="inferred from homology"/>